<reference key="1">
    <citation type="journal article" date="2008" name="Environ. Microbiol.">
        <title>The genome of Erwinia tasmaniensis strain Et1/99, a non-pathogenic bacterium in the genus Erwinia.</title>
        <authorList>
            <person name="Kube M."/>
            <person name="Migdoll A.M."/>
            <person name="Mueller I."/>
            <person name="Kuhl H."/>
            <person name="Beck A."/>
            <person name="Reinhardt R."/>
            <person name="Geider K."/>
        </authorList>
    </citation>
    <scope>NUCLEOTIDE SEQUENCE [LARGE SCALE GENOMIC DNA]</scope>
    <source>
        <strain>DSM 17950 / CFBP 7177 / CIP 109463 / NCPPB 4357 / Et1/99</strain>
    </source>
</reference>
<organism>
    <name type="scientific">Erwinia tasmaniensis (strain DSM 17950 / CFBP 7177 / CIP 109463 / NCPPB 4357 / Et1/99)</name>
    <dbReference type="NCBI Taxonomy" id="465817"/>
    <lineage>
        <taxon>Bacteria</taxon>
        <taxon>Pseudomonadati</taxon>
        <taxon>Pseudomonadota</taxon>
        <taxon>Gammaproteobacteria</taxon>
        <taxon>Enterobacterales</taxon>
        <taxon>Erwiniaceae</taxon>
        <taxon>Erwinia</taxon>
    </lineage>
</organism>
<feature type="chain" id="PRO_1000098404" description="Methionyl-tRNA formyltransferase">
    <location>
        <begin position="1"/>
        <end position="315"/>
    </location>
</feature>
<feature type="binding site" evidence="1">
    <location>
        <begin position="113"/>
        <end position="116"/>
    </location>
    <ligand>
        <name>(6S)-5,6,7,8-tetrahydrofolate</name>
        <dbReference type="ChEBI" id="CHEBI:57453"/>
    </ligand>
</feature>
<gene>
    <name evidence="1" type="primary">fmt</name>
    <name type="ordered locus">ETA_31290</name>
</gene>
<comment type="function">
    <text evidence="1">Attaches a formyl group to the free amino group of methionyl-tRNA(fMet). The formyl group appears to play a dual role in the initiator identity of N-formylmethionyl-tRNA by promoting its recognition by IF2 and preventing the misappropriation of this tRNA by the elongation apparatus.</text>
</comment>
<comment type="catalytic activity">
    <reaction evidence="1">
        <text>L-methionyl-tRNA(fMet) + (6R)-10-formyltetrahydrofolate = N-formyl-L-methionyl-tRNA(fMet) + (6S)-5,6,7,8-tetrahydrofolate + H(+)</text>
        <dbReference type="Rhea" id="RHEA:24380"/>
        <dbReference type="Rhea" id="RHEA-COMP:9952"/>
        <dbReference type="Rhea" id="RHEA-COMP:9953"/>
        <dbReference type="ChEBI" id="CHEBI:15378"/>
        <dbReference type="ChEBI" id="CHEBI:57453"/>
        <dbReference type="ChEBI" id="CHEBI:78530"/>
        <dbReference type="ChEBI" id="CHEBI:78844"/>
        <dbReference type="ChEBI" id="CHEBI:195366"/>
        <dbReference type="EC" id="2.1.2.9"/>
    </reaction>
</comment>
<comment type="similarity">
    <text evidence="1">Belongs to the Fmt family.</text>
</comment>
<name>FMT_ERWT9</name>
<keyword id="KW-0648">Protein biosynthesis</keyword>
<keyword id="KW-1185">Reference proteome</keyword>
<keyword id="KW-0808">Transferase</keyword>
<protein>
    <recommendedName>
        <fullName evidence="1">Methionyl-tRNA formyltransferase</fullName>
        <ecNumber evidence="1">2.1.2.9</ecNumber>
    </recommendedName>
</protein>
<sequence length="315" mass="34215">MSESLKIIFAGTPDFAARHLDALLSSGHQVVGVFTQPDRPAGRGNRVTASPVKQLAAQHNIPVFQPESLRSEENQQKVAALNADVMVVVAYGLILPKLVLEMPRHGCINVHGSLLPRWRGAAPIQRSLWAGDAETGVTIMQMDIGLDTGDMLHKLSCPIEAADTSATLYDKLADLGPAGLLTTLAQLADGSARPQVQDESLVSYAEKLSKEEARLDWSLSAQQLERCIRAFNPWPISYFVIDEQPVKVWKASVLPAVNGHQPGEILQANKQGIQVVTADGVLNIEELQPAGKKAMKAQDLLNSRREWFTPGNIIA</sequence>
<proteinExistence type="inferred from homology"/>
<accession>B2VK94</accession>
<evidence type="ECO:0000255" key="1">
    <source>
        <dbReference type="HAMAP-Rule" id="MF_00182"/>
    </source>
</evidence>
<dbReference type="EC" id="2.1.2.9" evidence="1"/>
<dbReference type="EMBL" id="CU468135">
    <property type="protein sequence ID" value="CAO98175.1"/>
    <property type="molecule type" value="Genomic_DNA"/>
</dbReference>
<dbReference type="RefSeq" id="WP_012442823.1">
    <property type="nucleotide sequence ID" value="NC_010694.1"/>
</dbReference>
<dbReference type="SMR" id="B2VK94"/>
<dbReference type="STRING" id="465817.ETA_31290"/>
<dbReference type="KEGG" id="eta:ETA_31290"/>
<dbReference type="eggNOG" id="COG0223">
    <property type="taxonomic scope" value="Bacteria"/>
</dbReference>
<dbReference type="HOGENOM" id="CLU_033347_1_2_6"/>
<dbReference type="OrthoDB" id="9802815at2"/>
<dbReference type="Proteomes" id="UP000001726">
    <property type="component" value="Chromosome"/>
</dbReference>
<dbReference type="GO" id="GO:0005829">
    <property type="term" value="C:cytosol"/>
    <property type="evidence" value="ECO:0007669"/>
    <property type="project" value="TreeGrafter"/>
</dbReference>
<dbReference type="GO" id="GO:0004479">
    <property type="term" value="F:methionyl-tRNA formyltransferase activity"/>
    <property type="evidence" value="ECO:0007669"/>
    <property type="project" value="UniProtKB-UniRule"/>
</dbReference>
<dbReference type="CDD" id="cd08646">
    <property type="entry name" value="FMT_core_Met-tRNA-FMT_N"/>
    <property type="match status" value="1"/>
</dbReference>
<dbReference type="CDD" id="cd08704">
    <property type="entry name" value="Met_tRNA_FMT_C"/>
    <property type="match status" value="1"/>
</dbReference>
<dbReference type="FunFam" id="3.10.25.10:FF:000001">
    <property type="entry name" value="Methionyl-tRNA formyltransferase"/>
    <property type="match status" value="1"/>
</dbReference>
<dbReference type="FunFam" id="3.40.50.12230:FF:000001">
    <property type="entry name" value="Methionyl-tRNA formyltransferase"/>
    <property type="match status" value="1"/>
</dbReference>
<dbReference type="FunFam" id="3.40.50.170:FF:000003">
    <property type="entry name" value="Methionyl-tRNA formyltransferase"/>
    <property type="match status" value="1"/>
</dbReference>
<dbReference type="Gene3D" id="3.10.25.10">
    <property type="entry name" value="Formyl transferase, C-terminal domain"/>
    <property type="match status" value="1"/>
</dbReference>
<dbReference type="Gene3D" id="3.40.50.170">
    <property type="entry name" value="Formyl transferase, N-terminal domain"/>
    <property type="match status" value="1"/>
</dbReference>
<dbReference type="HAMAP" id="MF_00182">
    <property type="entry name" value="Formyl_trans"/>
    <property type="match status" value="1"/>
</dbReference>
<dbReference type="InterPro" id="IPR005794">
    <property type="entry name" value="Fmt"/>
</dbReference>
<dbReference type="InterPro" id="IPR005793">
    <property type="entry name" value="Formyl_trans_C"/>
</dbReference>
<dbReference type="InterPro" id="IPR037022">
    <property type="entry name" value="Formyl_trans_C_sf"/>
</dbReference>
<dbReference type="InterPro" id="IPR002376">
    <property type="entry name" value="Formyl_transf_N"/>
</dbReference>
<dbReference type="InterPro" id="IPR036477">
    <property type="entry name" value="Formyl_transf_N_sf"/>
</dbReference>
<dbReference type="InterPro" id="IPR011034">
    <property type="entry name" value="Formyl_transferase-like_C_sf"/>
</dbReference>
<dbReference type="InterPro" id="IPR001555">
    <property type="entry name" value="GART_AS"/>
</dbReference>
<dbReference type="InterPro" id="IPR044135">
    <property type="entry name" value="Met-tRNA-FMT_C"/>
</dbReference>
<dbReference type="InterPro" id="IPR041711">
    <property type="entry name" value="Met-tRNA-FMT_N"/>
</dbReference>
<dbReference type="NCBIfam" id="TIGR00460">
    <property type="entry name" value="fmt"/>
    <property type="match status" value="1"/>
</dbReference>
<dbReference type="PANTHER" id="PTHR11138">
    <property type="entry name" value="METHIONYL-TRNA FORMYLTRANSFERASE"/>
    <property type="match status" value="1"/>
</dbReference>
<dbReference type="PANTHER" id="PTHR11138:SF5">
    <property type="entry name" value="METHIONYL-TRNA FORMYLTRANSFERASE, MITOCHONDRIAL"/>
    <property type="match status" value="1"/>
</dbReference>
<dbReference type="Pfam" id="PF02911">
    <property type="entry name" value="Formyl_trans_C"/>
    <property type="match status" value="1"/>
</dbReference>
<dbReference type="Pfam" id="PF00551">
    <property type="entry name" value="Formyl_trans_N"/>
    <property type="match status" value="1"/>
</dbReference>
<dbReference type="SUPFAM" id="SSF50486">
    <property type="entry name" value="FMT C-terminal domain-like"/>
    <property type="match status" value="1"/>
</dbReference>
<dbReference type="SUPFAM" id="SSF53328">
    <property type="entry name" value="Formyltransferase"/>
    <property type="match status" value="1"/>
</dbReference>
<dbReference type="PROSITE" id="PS00373">
    <property type="entry name" value="GART"/>
    <property type="match status" value="1"/>
</dbReference>